<dbReference type="EC" id="4.3.3.7" evidence="1"/>
<dbReference type="EMBL" id="CP000747">
    <property type="protein sequence ID" value="ACG78301.1"/>
    <property type="molecule type" value="Genomic_DNA"/>
</dbReference>
<dbReference type="RefSeq" id="WP_012522443.1">
    <property type="nucleotide sequence ID" value="NC_011144.1"/>
</dbReference>
<dbReference type="SMR" id="B4RCW4"/>
<dbReference type="STRING" id="450851.PHZ_c1890"/>
<dbReference type="KEGG" id="pzu:PHZ_c1890"/>
<dbReference type="eggNOG" id="COG0329">
    <property type="taxonomic scope" value="Bacteria"/>
</dbReference>
<dbReference type="HOGENOM" id="CLU_049343_7_1_5"/>
<dbReference type="OrthoDB" id="9782828at2"/>
<dbReference type="UniPathway" id="UPA00034">
    <property type="reaction ID" value="UER00017"/>
</dbReference>
<dbReference type="Proteomes" id="UP000001868">
    <property type="component" value="Chromosome"/>
</dbReference>
<dbReference type="GO" id="GO:0005829">
    <property type="term" value="C:cytosol"/>
    <property type="evidence" value="ECO:0007669"/>
    <property type="project" value="TreeGrafter"/>
</dbReference>
<dbReference type="GO" id="GO:0008840">
    <property type="term" value="F:4-hydroxy-tetrahydrodipicolinate synthase activity"/>
    <property type="evidence" value="ECO:0007669"/>
    <property type="project" value="UniProtKB-UniRule"/>
</dbReference>
<dbReference type="GO" id="GO:0019877">
    <property type="term" value="P:diaminopimelate biosynthetic process"/>
    <property type="evidence" value="ECO:0007669"/>
    <property type="project" value="UniProtKB-UniRule"/>
</dbReference>
<dbReference type="GO" id="GO:0009089">
    <property type="term" value="P:lysine biosynthetic process via diaminopimelate"/>
    <property type="evidence" value="ECO:0007669"/>
    <property type="project" value="UniProtKB-UniRule"/>
</dbReference>
<dbReference type="CDD" id="cd00950">
    <property type="entry name" value="DHDPS"/>
    <property type="match status" value="1"/>
</dbReference>
<dbReference type="Gene3D" id="3.20.20.70">
    <property type="entry name" value="Aldolase class I"/>
    <property type="match status" value="1"/>
</dbReference>
<dbReference type="HAMAP" id="MF_00418">
    <property type="entry name" value="DapA"/>
    <property type="match status" value="1"/>
</dbReference>
<dbReference type="InterPro" id="IPR013785">
    <property type="entry name" value="Aldolase_TIM"/>
</dbReference>
<dbReference type="InterPro" id="IPR005263">
    <property type="entry name" value="DapA"/>
</dbReference>
<dbReference type="InterPro" id="IPR002220">
    <property type="entry name" value="DapA-like"/>
</dbReference>
<dbReference type="InterPro" id="IPR020625">
    <property type="entry name" value="Schiff_base-form_aldolases_AS"/>
</dbReference>
<dbReference type="InterPro" id="IPR020624">
    <property type="entry name" value="Schiff_base-form_aldolases_CS"/>
</dbReference>
<dbReference type="NCBIfam" id="TIGR00674">
    <property type="entry name" value="dapA"/>
    <property type="match status" value="1"/>
</dbReference>
<dbReference type="PANTHER" id="PTHR12128:SF66">
    <property type="entry name" value="4-HYDROXY-2-OXOGLUTARATE ALDOLASE, MITOCHONDRIAL"/>
    <property type="match status" value="1"/>
</dbReference>
<dbReference type="PANTHER" id="PTHR12128">
    <property type="entry name" value="DIHYDRODIPICOLINATE SYNTHASE"/>
    <property type="match status" value="1"/>
</dbReference>
<dbReference type="Pfam" id="PF00701">
    <property type="entry name" value="DHDPS"/>
    <property type="match status" value="1"/>
</dbReference>
<dbReference type="PIRSF" id="PIRSF001365">
    <property type="entry name" value="DHDPS"/>
    <property type="match status" value="1"/>
</dbReference>
<dbReference type="PRINTS" id="PR00146">
    <property type="entry name" value="DHPICSNTHASE"/>
</dbReference>
<dbReference type="SMART" id="SM01130">
    <property type="entry name" value="DHDPS"/>
    <property type="match status" value="1"/>
</dbReference>
<dbReference type="SUPFAM" id="SSF51569">
    <property type="entry name" value="Aldolase"/>
    <property type="match status" value="1"/>
</dbReference>
<dbReference type="PROSITE" id="PS00665">
    <property type="entry name" value="DHDPS_1"/>
    <property type="match status" value="1"/>
</dbReference>
<dbReference type="PROSITE" id="PS00666">
    <property type="entry name" value="DHDPS_2"/>
    <property type="match status" value="1"/>
</dbReference>
<protein>
    <recommendedName>
        <fullName evidence="1">4-hydroxy-tetrahydrodipicolinate synthase</fullName>
        <shortName evidence="1">HTPA synthase</shortName>
        <ecNumber evidence="1">4.3.3.7</ecNumber>
    </recommendedName>
</protein>
<sequence>MIDPMFRGVLPALVTPYRNGQVDEDAFVALVERQIAGGVHGLVPVGTTGESATLTHEEHRRVVELCVKTARGRVPVVAGAGSNSTAEAIELVRHAKTVGADAALVVTPYYNRPSQEGLYAHYRAINDAVQLPILVYNVPTRTSVDISNDVLVRLSKLPNVVGIKDATSDLVRASFQRLHCGEEWVMLSGDDPVALGYMAHGGHGCISVTANVAPEQCADFYNAALSGDWATALQWQDRLVRLHKALFADASPAPTKFALSHLGLCSEETRLPITPASEAARAEVLAAMRDAGLI</sequence>
<organism>
    <name type="scientific">Phenylobacterium zucineum (strain HLK1)</name>
    <dbReference type="NCBI Taxonomy" id="450851"/>
    <lineage>
        <taxon>Bacteria</taxon>
        <taxon>Pseudomonadati</taxon>
        <taxon>Pseudomonadota</taxon>
        <taxon>Alphaproteobacteria</taxon>
        <taxon>Caulobacterales</taxon>
        <taxon>Caulobacteraceae</taxon>
        <taxon>Phenylobacterium</taxon>
    </lineage>
</organism>
<accession>B4RCW4</accession>
<proteinExistence type="inferred from homology"/>
<gene>
    <name evidence="1" type="primary">dapA</name>
    <name type="ordered locus">PHZ_c1890</name>
</gene>
<reference key="1">
    <citation type="journal article" date="2008" name="BMC Genomics">
        <title>Complete genome of Phenylobacterium zucineum - a novel facultative intracellular bacterium isolated from human erythroleukemia cell line K562.</title>
        <authorList>
            <person name="Luo Y."/>
            <person name="Xu X."/>
            <person name="Ding Z."/>
            <person name="Liu Z."/>
            <person name="Zhang B."/>
            <person name="Yan Z."/>
            <person name="Sun J."/>
            <person name="Hu S."/>
            <person name="Hu X."/>
        </authorList>
    </citation>
    <scope>NUCLEOTIDE SEQUENCE [LARGE SCALE GENOMIC DNA]</scope>
    <source>
        <strain>HLK1</strain>
    </source>
</reference>
<keyword id="KW-0028">Amino-acid biosynthesis</keyword>
<keyword id="KW-0963">Cytoplasm</keyword>
<keyword id="KW-0220">Diaminopimelate biosynthesis</keyword>
<keyword id="KW-0456">Lyase</keyword>
<keyword id="KW-0457">Lysine biosynthesis</keyword>
<keyword id="KW-1185">Reference proteome</keyword>
<keyword id="KW-0704">Schiff base</keyword>
<evidence type="ECO:0000255" key="1">
    <source>
        <dbReference type="HAMAP-Rule" id="MF_00418"/>
    </source>
</evidence>
<evidence type="ECO:0000305" key="2"/>
<name>DAPA_PHEZH</name>
<comment type="function">
    <text evidence="1">Catalyzes the condensation of (S)-aspartate-beta-semialdehyde [(S)-ASA] and pyruvate to 4-hydroxy-tetrahydrodipicolinate (HTPA).</text>
</comment>
<comment type="catalytic activity">
    <reaction evidence="1">
        <text>L-aspartate 4-semialdehyde + pyruvate = (2S,4S)-4-hydroxy-2,3,4,5-tetrahydrodipicolinate + H2O + H(+)</text>
        <dbReference type="Rhea" id="RHEA:34171"/>
        <dbReference type="ChEBI" id="CHEBI:15361"/>
        <dbReference type="ChEBI" id="CHEBI:15377"/>
        <dbReference type="ChEBI" id="CHEBI:15378"/>
        <dbReference type="ChEBI" id="CHEBI:67139"/>
        <dbReference type="ChEBI" id="CHEBI:537519"/>
        <dbReference type="EC" id="4.3.3.7"/>
    </reaction>
</comment>
<comment type="pathway">
    <text evidence="1">Amino-acid biosynthesis; L-lysine biosynthesis via DAP pathway; (S)-tetrahydrodipicolinate from L-aspartate: step 3/4.</text>
</comment>
<comment type="subunit">
    <text evidence="1">Homotetramer; dimer of dimers.</text>
</comment>
<comment type="subcellular location">
    <subcellularLocation>
        <location evidence="1">Cytoplasm</location>
    </subcellularLocation>
</comment>
<comment type="similarity">
    <text evidence="1">Belongs to the DapA family.</text>
</comment>
<comment type="caution">
    <text evidence="2">Was originally thought to be a dihydrodipicolinate synthase (DHDPS), catalyzing the condensation of (S)-aspartate-beta-semialdehyde [(S)-ASA] and pyruvate to dihydrodipicolinate (DHDP). However, it was shown in E.coli that the product of the enzymatic reaction is not dihydrodipicolinate but in fact (4S)-4-hydroxy-2,3,4,5-tetrahydro-(2S)-dipicolinic acid (HTPA), and that the consecutive dehydration reaction leading to DHDP is not spontaneous but catalyzed by DapB.</text>
</comment>
<feature type="chain" id="PRO_1000124056" description="4-hydroxy-tetrahydrodipicolinate synthase">
    <location>
        <begin position="1"/>
        <end position="294"/>
    </location>
</feature>
<feature type="active site" description="Proton donor/acceptor" evidence="1">
    <location>
        <position position="136"/>
    </location>
</feature>
<feature type="active site" description="Schiff-base intermediate with substrate" evidence="1">
    <location>
        <position position="164"/>
    </location>
</feature>
<feature type="binding site" evidence="1">
    <location>
        <position position="48"/>
    </location>
    <ligand>
        <name>pyruvate</name>
        <dbReference type="ChEBI" id="CHEBI:15361"/>
    </ligand>
</feature>
<feature type="binding site" evidence="1">
    <location>
        <position position="206"/>
    </location>
    <ligand>
        <name>pyruvate</name>
        <dbReference type="ChEBI" id="CHEBI:15361"/>
    </ligand>
</feature>
<feature type="site" description="Part of a proton relay during catalysis" evidence="1">
    <location>
        <position position="47"/>
    </location>
</feature>
<feature type="site" description="Part of a proton relay during catalysis" evidence="1">
    <location>
        <position position="110"/>
    </location>
</feature>